<feature type="chain" id="PRO_0000462129" description="Phosphopantothenoylcysteine decarboxylase HAL3a">
    <location>
        <begin position="1"/>
        <end position="211"/>
    </location>
</feature>
<feature type="active site" description="Proton donor" evidence="1">
    <location>
        <position position="93"/>
    </location>
</feature>
<feature type="active site" description="Proton donor" evidence="1">
    <location>
        <position position="178"/>
    </location>
</feature>
<feature type="binding site" evidence="1">
    <location>
        <begin position="31"/>
        <end position="33"/>
    </location>
    <ligand>
        <name>FMN</name>
        <dbReference type="ChEBI" id="CHEBI:58210"/>
    </ligand>
</feature>
<feature type="binding site" evidence="1">
    <location>
        <begin position="56"/>
        <end position="58"/>
    </location>
    <ligand>
        <name>FMN</name>
        <dbReference type="ChEBI" id="CHEBI:58210"/>
    </ligand>
</feature>
<feature type="binding site" evidence="1">
    <location>
        <begin position="109"/>
        <end position="112"/>
    </location>
    <ligand>
        <name>FMN</name>
        <dbReference type="ChEBI" id="CHEBI:58210"/>
    </ligand>
</feature>
<feature type="binding site" evidence="1">
    <location>
        <position position="143"/>
    </location>
    <ligand>
        <name>FMN</name>
        <dbReference type="ChEBI" id="CHEBI:58210"/>
    </ligand>
</feature>
<feature type="binding site" evidence="1">
    <location>
        <position position="145"/>
    </location>
    <ligand>
        <name>N-[(R)-4-phosphopantothenoyl]-L-cysteine</name>
        <dbReference type="ChEBI" id="CHEBI:59458"/>
    </ligand>
</feature>
<feature type="binding site" evidence="1">
    <location>
        <position position="175"/>
    </location>
    <ligand>
        <name>N-[(R)-4-phosphopantothenoyl]-L-cysteine</name>
        <dbReference type="ChEBI" id="CHEBI:59458"/>
    </ligand>
</feature>
<feature type="binding site" evidence="1">
    <location>
        <position position="177"/>
    </location>
    <ligand>
        <name>N-[(R)-4-phosphopantothenoyl]-L-cysteine</name>
        <dbReference type="ChEBI" id="CHEBI:59458"/>
    </ligand>
</feature>
<feature type="binding site" evidence="1">
    <location>
        <position position="186"/>
    </location>
    <ligand>
        <name>N-[(R)-4-phosphopantothenoyl]-L-cysteine</name>
        <dbReference type="ChEBI" id="CHEBI:59458"/>
    </ligand>
</feature>
<feature type="site" description="Important for catalytic activity" evidence="1">
    <location>
        <position position="178"/>
    </location>
</feature>
<keyword id="KW-1003">Cell membrane</keyword>
<keyword id="KW-0173">Coenzyme A biosynthesis</keyword>
<keyword id="KW-0210">Decarboxylase</keyword>
<keyword id="KW-0285">Flavoprotein</keyword>
<keyword id="KW-0288">FMN</keyword>
<keyword id="KW-0341">Growth regulation</keyword>
<keyword id="KW-0456">Lyase</keyword>
<keyword id="KW-0472">Membrane</keyword>
<keyword id="KW-0539">Nucleus</keyword>
<keyword id="KW-1185">Reference proteome</keyword>
<keyword id="KW-0346">Stress response</keyword>
<evidence type="ECO:0000250" key="1">
    <source>
        <dbReference type="UniProtKB" id="Q9SWE5"/>
    </source>
</evidence>
<evidence type="ECO:0000269" key="2">
    <source ref="3"/>
</evidence>
<evidence type="ECO:0000269" key="3">
    <source ref="4"/>
</evidence>
<evidence type="ECO:0000303" key="4">
    <source ref="3"/>
</evidence>
<evidence type="ECO:0000303" key="5">
    <source ref="4"/>
</evidence>
<evidence type="ECO:0000305" key="6"/>
<evidence type="ECO:0000305" key="7">
    <source ref="4"/>
</evidence>
<evidence type="ECO:0000312" key="8">
    <source>
        <dbReference type="EMBL" id="ACU14523.1"/>
    </source>
</evidence>
<evidence type="ECO:0000312" key="9">
    <source>
        <dbReference type="EMBL" id="KRH65212.1"/>
    </source>
</evidence>
<protein>
    <recommendedName>
        <fullName evidence="6">Phosphopantothenoylcysteine decarboxylase HAL3a</fullName>
        <shortName evidence="6">PPCDC</shortName>
        <ecNumber evidence="1">4.1.1.36</ecNumber>
    </recommendedName>
    <alternativeName>
        <fullName evidence="4 5">Halotolerance protein 3a</fullName>
        <shortName evidence="4 5">GmHAL3a</shortName>
    </alternativeName>
</protein>
<comment type="function">
    <text evidence="1 2">Involved in plant growth, and promotes salt (e.g. NaCl and LiCl) and osmotic tolerance, probably via coenzyme A (CoA) and endogenous proline accumulation (Ref.3). Catalyzes the decarboxylation of 4'-phosphopantothenoylcysteine to 4'-phosphopantetheine, a key step in coenzyme A biosynthesis (By similarity). Favors seed germination and helps the onset of flowering (Ref.3). Required for roots development (Ref.3).</text>
</comment>
<comment type="catalytic activity">
    <reaction evidence="1">
        <text>N-[(R)-4-phosphopantothenoyl]-L-cysteine + H(+) = (R)-4'-phosphopantetheine + CO2</text>
        <dbReference type="Rhea" id="RHEA:16793"/>
        <dbReference type="ChEBI" id="CHEBI:15378"/>
        <dbReference type="ChEBI" id="CHEBI:16526"/>
        <dbReference type="ChEBI" id="CHEBI:59458"/>
        <dbReference type="ChEBI" id="CHEBI:61723"/>
        <dbReference type="EC" id="4.1.1.36"/>
    </reaction>
    <physiologicalReaction direction="left-to-right" evidence="1">
        <dbReference type="Rhea" id="RHEA:16794"/>
    </physiologicalReaction>
</comment>
<comment type="cofactor">
    <cofactor evidence="1">
        <name>FMN</name>
        <dbReference type="ChEBI" id="CHEBI:58210"/>
    </cofactor>
    <text evidence="1">Binds 1 FMN per subunit.</text>
</comment>
<comment type="pathway">
    <text evidence="1">Cofactor biosynthesis; coenzyme A biosynthesis; CoA from (R)-pantothenate: step 3/5.</text>
</comment>
<comment type="subunit">
    <text evidence="1 3">Homotrimer (By similarity). Interacts with CYP2 in the plasma membrane and nucleus (Ref.4).</text>
</comment>
<comment type="subcellular location">
    <subcellularLocation>
        <location evidence="3">Cell membrane</location>
    </subcellularLocation>
    <subcellularLocation>
        <location evidence="3">Nucleus</location>
    </subcellularLocation>
</comment>
<comment type="tissue specificity">
    <text evidence="2">Mainly expressed in roots, to a lower extent in stems, and at low levels in leaves and seeds.</text>
</comment>
<comment type="developmental stage">
    <text evidence="2">Gradual accumulation in flowering plants with a transient peak in seeds 65 days after flowering.</text>
</comment>
<comment type="induction">
    <text evidence="2">Induced by salt (NaCl), lithium chloride (LiCl), sorbitol, cold and abscisic acid (ABA).</text>
</comment>
<comment type="miscellaneous">
    <text evidence="7">The cv. Suxie No.1 (SX1) is more tolerant to salt stress than the cv. Tianlong No.1 (TL1).</text>
</comment>
<comment type="similarity">
    <text evidence="6">Belongs to the HFCD (homooligomeric flavin containing Cys decarboxylase) superfamily.</text>
</comment>
<reference evidence="8" key="1">
    <citation type="submission" date="2009-08" db="EMBL/GenBank/DDBJ databases">
        <authorList>
            <person name="Cheung F."/>
            <person name="Xiao Y."/>
            <person name="Chan A."/>
            <person name="Moskal W."/>
            <person name="Town C.D."/>
        </authorList>
    </citation>
    <scope>NUCLEOTIDE SEQUENCE [MRNA]</scope>
</reference>
<reference key="2">
    <citation type="journal article" date="2010" name="Nature">
        <title>Genome sequence of the palaeopolyploid soybean.</title>
        <authorList>
            <person name="Schmutz J."/>
            <person name="Cannon S.B."/>
            <person name="Schlueter J."/>
            <person name="Ma J."/>
            <person name="Mitros T."/>
            <person name="Nelson W."/>
            <person name="Hyten D.L."/>
            <person name="Song Q."/>
            <person name="Thelen J.J."/>
            <person name="Cheng J."/>
            <person name="Xu D."/>
            <person name="Hellsten U."/>
            <person name="May G.D."/>
            <person name="Yu Y."/>
            <person name="Sakurai T."/>
            <person name="Umezawa T."/>
            <person name="Bhattacharyya M.K."/>
            <person name="Sandhu D."/>
            <person name="Valliyodan B."/>
            <person name="Lindquist E."/>
            <person name="Peto M."/>
            <person name="Grant D."/>
            <person name="Shu S."/>
            <person name="Goodstein D."/>
            <person name="Barry K."/>
            <person name="Futrell-Griggs M."/>
            <person name="Abernathy B."/>
            <person name="Du J."/>
            <person name="Tian Z."/>
            <person name="Zhu L."/>
            <person name="Gill N."/>
            <person name="Joshi T."/>
            <person name="Libault M."/>
            <person name="Sethuraman A."/>
            <person name="Zhang X.-C."/>
            <person name="Shinozaki K."/>
            <person name="Nguyen H.T."/>
            <person name="Wing R.A."/>
            <person name="Cregan P."/>
            <person name="Specht J."/>
            <person name="Grimwood J."/>
            <person name="Rokhsar D."/>
            <person name="Stacey G."/>
            <person name="Shoemaker R.C."/>
            <person name="Jackson S.A."/>
        </authorList>
    </citation>
    <scope>NUCLEOTIDE SEQUENCE [LARGE SCALE GENOMIC DNA]</scope>
    <source>
        <strain>cv. Williams 82</strain>
        <tissue>Callus</tissue>
    </source>
</reference>
<reference key="3">
    <citation type="journal article" date="2016" name="J. Plant Biol.">
        <title>Over-expression of GmHAL3 modulates salt stresses tolerance in transgenic Arabidopsis.</title>
        <authorList>
            <person name="Guo N."/>
            <person name="Wang M.-X."/>
            <person name="Xue C.-C."/>
            <person name="Xue D."/>
            <person name="Xu J.-Y."/>
            <person name="Wang H.-T."/>
            <person name="Gai J.-Y."/>
            <person name="Xing H."/>
            <person name="Zhao J.-M."/>
        </authorList>
    </citation>
    <scope>FUNCTION</scope>
    <scope>TISSUE SPECIFICITY</scope>
    <scope>DEVELOPMENTAL STAGE</scope>
    <scope>INDUCTION BY SALT; LITHIUM CHLORIDE; SORBITOL; COLD AND ABSCISIC ACID</scope>
    <source>
        <strain>cv. Suxie No.1</strain>
    </source>
</reference>
<reference key="4">
    <citation type="journal article" date="2024" name="Environ. Exp. Bot.">
        <title>The GmCYP2-GmHAL3 module regulates salt tolerance in soybean seedlings.</title>
        <authorList>
            <person name="Gou H."/>
            <person name="Gan J."/>
            <person name="Liu J."/>
            <person name="Deng S."/>
            <person name="Gan L."/>
            <person name="Wang X."/>
            <person name="Zhao J."/>
            <person name="Xing H."/>
            <person name="Guo N."/>
        </authorList>
    </citation>
    <scope>INTERACTION WITH CYP2</scope>
    <scope>SUBCELLULAR LOCATION</scope>
    <source>
        <strain>cv. Suxie No.1</strain>
        <strain>cv. Tianlong No.1</strain>
    </source>
</reference>
<name>HAL3A_SOYBN</name>
<proteinExistence type="evidence at protein level"/>
<sequence>MAGSEPVRAEGETMAVDAAPRKPRILLAASGSVAAVKFANLCHCFSEWADVRAVSTSASLHFIDRAAMPKDVILYTDDNEWSSWKKLGDSVLHIELRKWADIMVIAPLSANTLGKIAGGLCDNLLTCIVRAWDYSKPFFVAPAMNTFMWNNPFTERHLISIDELGISLIPPVTKRLACGDYGNGAMAEPSTIYSTVRLFYESKAQQGNGDI</sequence>
<dbReference type="EC" id="4.1.1.36" evidence="1"/>
<dbReference type="EMBL" id="BT090448">
    <property type="protein sequence ID" value="ACU14523.1"/>
    <property type="molecule type" value="mRNA"/>
</dbReference>
<dbReference type="EMBL" id="CM000836">
    <property type="protein sequence ID" value="KRH65212.1"/>
    <property type="molecule type" value="Genomic_DNA"/>
</dbReference>
<dbReference type="EMBL" id="CM000836">
    <property type="protein sequence ID" value="KRH65213.1"/>
    <property type="molecule type" value="Genomic_DNA"/>
</dbReference>
<dbReference type="EMBL" id="CM000836">
    <property type="protein sequence ID" value="KRH65214.1"/>
    <property type="molecule type" value="Genomic_DNA"/>
</dbReference>
<dbReference type="EMBL" id="CM000836">
    <property type="protein sequence ID" value="KRH65215.1"/>
    <property type="molecule type" value="Genomic_DNA"/>
</dbReference>
<dbReference type="SMR" id="C6SZ50"/>
<dbReference type="FunCoup" id="C6SZ50">
    <property type="interactions" value="5040"/>
</dbReference>
<dbReference type="STRING" id="3847.C6SZ50"/>
<dbReference type="PaxDb" id="3847-GLYMA03G02380.4"/>
<dbReference type="EnsemblPlants" id="KRH65212">
    <property type="protein sequence ID" value="KRH65212"/>
    <property type="gene ID" value="GLYMA_03G020900"/>
</dbReference>
<dbReference type="EnsemblPlants" id="KRH65213">
    <property type="protein sequence ID" value="KRH65213"/>
    <property type="gene ID" value="GLYMA_03G020900"/>
</dbReference>
<dbReference type="EnsemblPlants" id="KRH65214">
    <property type="protein sequence ID" value="KRH65214"/>
    <property type="gene ID" value="GLYMA_03G020900"/>
</dbReference>
<dbReference type="EnsemblPlants" id="KRH65215">
    <property type="protein sequence ID" value="KRH65215"/>
    <property type="gene ID" value="GLYMA_03G020900"/>
</dbReference>
<dbReference type="Gramene" id="KRH65212">
    <property type="protein sequence ID" value="KRH65212"/>
    <property type="gene ID" value="GLYMA_03G020900"/>
</dbReference>
<dbReference type="Gramene" id="KRH65213">
    <property type="protein sequence ID" value="KRH65213"/>
    <property type="gene ID" value="GLYMA_03G020900"/>
</dbReference>
<dbReference type="Gramene" id="KRH65214">
    <property type="protein sequence ID" value="KRH65214"/>
    <property type="gene ID" value="GLYMA_03G020900"/>
</dbReference>
<dbReference type="Gramene" id="KRH65215">
    <property type="protein sequence ID" value="KRH65215"/>
    <property type="gene ID" value="GLYMA_03G020900"/>
</dbReference>
<dbReference type="KEGG" id="gmx:100499989"/>
<dbReference type="eggNOG" id="KOG0672">
    <property type="taxonomic scope" value="Eukaryota"/>
</dbReference>
<dbReference type="HOGENOM" id="CLU_033319_3_2_1"/>
<dbReference type="InParanoid" id="C6SZ50"/>
<dbReference type="OMA" id="KGLACGD"/>
<dbReference type="OrthoDB" id="168599at2759"/>
<dbReference type="UniPathway" id="UPA00241">
    <property type="reaction ID" value="UER00354"/>
</dbReference>
<dbReference type="Proteomes" id="UP000008827">
    <property type="component" value="Chromosome 3"/>
</dbReference>
<dbReference type="GO" id="GO:0005634">
    <property type="term" value="C:nucleus"/>
    <property type="evidence" value="ECO:0000314"/>
    <property type="project" value="UniProtKB"/>
</dbReference>
<dbReference type="GO" id="GO:0071513">
    <property type="term" value="C:phosphopantothenoylcysteine decarboxylase complex"/>
    <property type="evidence" value="ECO:0000318"/>
    <property type="project" value="GO_Central"/>
</dbReference>
<dbReference type="GO" id="GO:0005886">
    <property type="term" value="C:plasma membrane"/>
    <property type="evidence" value="ECO:0000314"/>
    <property type="project" value="UniProtKB"/>
</dbReference>
<dbReference type="GO" id="GO:0010181">
    <property type="term" value="F:FMN binding"/>
    <property type="evidence" value="ECO:0000318"/>
    <property type="project" value="GO_Central"/>
</dbReference>
<dbReference type="GO" id="GO:0004633">
    <property type="term" value="F:phosphopantothenoylcysteine decarboxylase activity"/>
    <property type="evidence" value="ECO:0000318"/>
    <property type="project" value="GO_Central"/>
</dbReference>
<dbReference type="GO" id="GO:0015937">
    <property type="term" value="P:coenzyme A biosynthetic process"/>
    <property type="evidence" value="ECO:0000318"/>
    <property type="project" value="GO_Central"/>
</dbReference>
<dbReference type="GO" id="GO:0048573">
    <property type="term" value="P:photoperiodism, flowering"/>
    <property type="evidence" value="ECO:0000270"/>
    <property type="project" value="UniProtKB"/>
</dbReference>
<dbReference type="GO" id="GO:1901002">
    <property type="term" value="P:positive regulation of response to salt stress"/>
    <property type="evidence" value="ECO:0000315"/>
    <property type="project" value="UniProtKB"/>
</dbReference>
<dbReference type="GO" id="GO:0009737">
    <property type="term" value="P:response to abscisic acid"/>
    <property type="evidence" value="ECO:0000270"/>
    <property type="project" value="UniProtKB"/>
</dbReference>
<dbReference type="GO" id="GO:0009409">
    <property type="term" value="P:response to cold"/>
    <property type="evidence" value="ECO:0000270"/>
    <property type="project" value="UniProtKB"/>
</dbReference>
<dbReference type="GO" id="GO:0010226">
    <property type="term" value="P:response to lithium ion"/>
    <property type="evidence" value="ECO:0000315"/>
    <property type="project" value="UniProtKB"/>
</dbReference>
<dbReference type="GO" id="GO:1902074">
    <property type="term" value="P:response to salt"/>
    <property type="evidence" value="ECO:0000270"/>
    <property type="project" value="UniProtKB"/>
</dbReference>
<dbReference type="GO" id="GO:0072708">
    <property type="term" value="P:response to sorbitol"/>
    <property type="evidence" value="ECO:0000315"/>
    <property type="project" value="UniProtKB"/>
</dbReference>
<dbReference type="FunFam" id="3.40.50.1950:FF:000004">
    <property type="entry name" value="Phosphopantothenoylcysteine decarboxylase"/>
    <property type="match status" value="1"/>
</dbReference>
<dbReference type="Gene3D" id="3.40.50.1950">
    <property type="entry name" value="Flavin prenyltransferase-like"/>
    <property type="match status" value="1"/>
</dbReference>
<dbReference type="InterPro" id="IPR036551">
    <property type="entry name" value="Flavin_trans-like"/>
</dbReference>
<dbReference type="InterPro" id="IPR003382">
    <property type="entry name" value="Flavoprotein"/>
</dbReference>
<dbReference type="PANTHER" id="PTHR14359">
    <property type="entry name" value="HOMO-OLIGOMERIC FLAVIN CONTAINING CYS DECARBOXYLASE FAMILY"/>
    <property type="match status" value="1"/>
</dbReference>
<dbReference type="PANTHER" id="PTHR14359:SF6">
    <property type="entry name" value="PHOSPHOPANTOTHENOYLCYSTEINE DECARBOXYLASE"/>
    <property type="match status" value="1"/>
</dbReference>
<dbReference type="Pfam" id="PF02441">
    <property type="entry name" value="Flavoprotein"/>
    <property type="match status" value="1"/>
</dbReference>
<dbReference type="SUPFAM" id="SSF52507">
    <property type="entry name" value="Homo-oligomeric flavin-containing Cys decarboxylases, HFCD"/>
    <property type="match status" value="1"/>
</dbReference>
<gene>
    <name evidence="4 5" type="primary">HAL3A</name>
    <name evidence="9" type="ordered locus">Glyma03g020900</name>
</gene>
<accession>C6SZ50</accession>
<organism>
    <name type="scientific">Glycine max</name>
    <name type="common">Soybean</name>
    <name type="synonym">Glycine hispida</name>
    <dbReference type="NCBI Taxonomy" id="3847"/>
    <lineage>
        <taxon>Eukaryota</taxon>
        <taxon>Viridiplantae</taxon>
        <taxon>Streptophyta</taxon>
        <taxon>Embryophyta</taxon>
        <taxon>Tracheophyta</taxon>
        <taxon>Spermatophyta</taxon>
        <taxon>Magnoliopsida</taxon>
        <taxon>eudicotyledons</taxon>
        <taxon>Gunneridae</taxon>
        <taxon>Pentapetalae</taxon>
        <taxon>rosids</taxon>
        <taxon>fabids</taxon>
        <taxon>Fabales</taxon>
        <taxon>Fabaceae</taxon>
        <taxon>Papilionoideae</taxon>
        <taxon>50 kb inversion clade</taxon>
        <taxon>NPAAA clade</taxon>
        <taxon>indigoferoid/millettioid clade</taxon>
        <taxon>Phaseoleae</taxon>
        <taxon>Glycine</taxon>
        <taxon>Glycine subgen. Soja</taxon>
    </lineage>
</organism>